<proteinExistence type="inferred from homology"/>
<dbReference type="EC" id="4.1.1.39" evidence="1"/>
<dbReference type="EMBL" id="CP000319">
    <property type="protein sequence ID" value="ABE64475.1"/>
    <property type="molecule type" value="Genomic_DNA"/>
</dbReference>
<dbReference type="RefSeq" id="WP_011512110.1">
    <property type="nucleotide sequence ID" value="NC_007964.1"/>
</dbReference>
<dbReference type="SMR" id="Q1QH22"/>
<dbReference type="STRING" id="323097.Nham_3751"/>
<dbReference type="KEGG" id="nha:Nham_3751"/>
<dbReference type="eggNOG" id="COG1850">
    <property type="taxonomic scope" value="Bacteria"/>
</dbReference>
<dbReference type="HOGENOM" id="CLU_031450_2_0_5"/>
<dbReference type="OrthoDB" id="9764279at2"/>
<dbReference type="Proteomes" id="UP000001953">
    <property type="component" value="Chromosome"/>
</dbReference>
<dbReference type="GO" id="GO:0000287">
    <property type="term" value="F:magnesium ion binding"/>
    <property type="evidence" value="ECO:0007669"/>
    <property type="project" value="UniProtKB-UniRule"/>
</dbReference>
<dbReference type="GO" id="GO:0004497">
    <property type="term" value="F:monooxygenase activity"/>
    <property type="evidence" value="ECO:0007669"/>
    <property type="project" value="UniProtKB-KW"/>
</dbReference>
<dbReference type="GO" id="GO:0016984">
    <property type="term" value="F:ribulose-bisphosphate carboxylase activity"/>
    <property type="evidence" value="ECO:0007669"/>
    <property type="project" value="UniProtKB-UniRule"/>
</dbReference>
<dbReference type="GO" id="GO:0019253">
    <property type="term" value="P:reductive pentose-phosphate cycle"/>
    <property type="evidence" value="ECO:0007669"/>
    <property type="project" value="UniProtKB-UniRule"/>
</dbReference>
<dbReference type="CDD" id="cd08212">
    <property type="entry name" value="RuBisCO_large_I"/>
    <property type="match status" value="1"/>
</dbReference>
<dbReference type="Gene3D" id="3.20.20.110">
    <property type="entry name" value="Ribulose bisphosphate carboxylase, large subunit, C-terminal domain"/>
    <property type="match status" value="1"/>
</dbReference>
<dbReference type="Gene3D" id="3.30.70.150">
    <property type="entry name" value="RuBisCO large subunit, N-terminal domain"/>
    <property type="match status" value="1"/>
</dbReference>
<dbReference type="HAMAP" id="MF_01338">
    <property type="entry name" value="RuBisCO_L_type1"/>
    <property type="match status" value="1"/>
</dbReference>
<dbReference type="InterPro" id="IPR033966">
    <property type="entry name" value="RuBisCO"/>
</dbReference>
<dbReference type="InterPro" id="IPR020878">
    <property type="entry name" value="RuBisCo_large_chain_AS"/>
</dbReference>
<dbReference type="InterPro" id="IPR000685">
    <property type="entry name" value="RuBisCO_lsu_C"/>
</dbReference>
<dbReference type="InterPro" id="IPR036376">
    <property type="entry name" value="RuBisCO_lsu_C_sf"/>
</dbReference>
<dbReference type="InterPro" id="IPR017443">
    <property type="entry name" value="RuBisCO_lsu_fd_N"/>
</dbReference>
<dbReference type="InterPro" id="IPR036422">
    <property type="entry name" value="RuBisCO_lsu_N_sf"/>
</dbReference>
<dbReference type="InterPro" id="IPR020888">
    <property type="entry name" value="RuBisCO_lsuI"/>
</dbReference>
<dbReference type="NCBIfam" id="NF003252">
    <property type="entry name" value="PRK04208.1"/>
    <property type="match status" value="1"/>
</dbReference>
<dbReference type="PANTHER" id="PTHR42704">
    <property type="entry name" value="RIBULOSE BISPHOSPHATE CARBOXYLASE"/>
    <property type="match status" value="1"/>
</dbReference>
<dbReference type="PANTHER" id="PTHR42704:SF17">
    <property type="entry name" value="RIBULOSE BISPHOSPHATE CARBOXYLASE LARGE CHAIN"/>
    <property type="match status" value="1"/>
</dbReference>
<dbReference type="Pfam" id="PF00016">
    <property type="entry name" value="RuBisCO_large"/>
    <property type="match status" value="1"/>
</dbReference>
<dbReference type="Pfam" id="PF02788">
    <property type="entry name" value="RuBisCO_large_N"/>
    <property type="match status" value="1"/>
</dbReference>
<dbReference type="SFLD" id="SFLDG01052">
    <property type="entry name" value="RuBisCO"/>
    <property type="match status" value="1"/>
</dbReference>
<dbReference type="SFLD" id="SFLDS00014">
    <property type="entry name" value="RuBisCO"/>
    <property type="match status" value="1"/>
</dbReference>
<dbReference type="SFLD" id="SFLDG00301">
    <property type="entry name" value="RuBisCO-like_proteins"/>
    <property type="match status" value="1"/>
</dbReference>
<dbReference type="SUPFAM" id="SSF51649">
    <property type="entry name" value="RuBisCo, C-terminal domain"/>
    <property type="match status" value="1"/>
</dbReference>
<dbReference type="SUPFAM" id="SSF54966">
    <property type="entry name" value="RuBisCO, large subunit, small (N-terminal) domain"/>
    <property type="match status" value="1"/>
</dbReference>
<dbReference type="PROSITE" id="PS00157">
    <property type="entry name" value="RUBISCO_LARGE"/>
    <property type="match status" value="1"/>
</dbReference>
<feature type="chain" id="PRO_0000251446" description="Ribulose bisphosphate carboxylase large chain 1">
    <location>
        <begin position="1"/>
        <end position="488"/>
    </location>
</feature>
<feature type="active site" description="Proton acceptor" evidence="1">
    <location>
        <position position="180"/>
    </location>
</feature>
<feature type="active site" description="Proton acceptor" evidence="1">
    <location>
        <position position="298"/>
    </location>
</feature>
<feature type="binding site" description="in homodimeric partner" evidence="1">
    <location>
        <position position="128"/>
    </location>
    <ligand>
        <name>substrate</name>
    </ligand>
</feature>
<feature type="binding site" evidence="1">
    <location>
        <position position="178"/>
    </location>
    <ligand>
        <name>substrate</name>
    </ligand>
</feature>
<feature type="binding site" evidence="1">
    <location>
        <position position="182"/>
    </location>
    <ligand>
        <name>substrate</name>
    </ligand>
</feature>
<feature type="binding site" description="via carbamate group" evidence="1">
    <location>
        <position position="206"/>
    </location>
    <ligand>
        <name>Mg(2+)</name>
        <dbReference type="ChEBI" id="CHEBI:18420"/>
    </ligand>
</feature>
<feature type="binding site" evidence="1">
    <location>
        <position position="208"/>
    </location>
    <ligand>
        <name>Mg(2+)</name>
        <dbReference type="ChEBI" id="CHEBI:18420"/>
    </ligand>
</feature>
<feature type="binding site" evidence="1">
    <location>
        <position position="209"/>
    </location>
    <ligand>
        <name>Mg(2+)</name>
        <dbReference type="ChEBI" id="CHEBI:18420"/>
    </ligand>
</feature>
<feature type="binding site" evidence="1">
    <location>
        <position position="299"/>
    </location>
    <ligand>
        <name>substrate</name>
    </ligand>
</feature>
<feature type="binding site" evidence="1">
    <location>
        <position position="331"/>
    </location>
    <ligand>
        <name>substrate</name>
    </ligand>
</feature>
<feature type="binding site" evidence="1">
    <location>
        <position position="383"/>
    </location>
    <ligand>
        <name>substrate</name>
    </ligand>
</feature>
<feature type="site" description="Transition state stabilizer" evidence="1">
    <location>
        <position position="338"/>
    </location>
</feature>
<feature type="modified residue" description="N6-carboxylysine" evidence="1">
    <location>
        <position position="206"/>
    </location>
</feature>
<comment type="function">
    <text evidence="1">RuBisCO catalyzes two reactions: the carboxylation of D-ribulose 1,5-bisphosphate, the primary event in carbon dioxide fixation, as well as the oxidative fragmentation of the pentose substrate. Both reactions occur simultaneously and in competition at the same active site.</text>
</comment>
<comment type="catalytic activity">
    <reaction evidence="1">
        <text>2 (2R)-3-phosphoglycerate + 2 H(+) = D-ribulose 1,5-bisphosphate + CO2 + H2O</text>
        <dbReference type="Rhea" id="RHEA:23124"/>
        <dbReference type="ChEBI" id="CHEBI:15377"/>
        <dbReference type="ChEBI" id="CHEBI:15378"/>
        <dbReference type="ChEBI" id="CHEBI:16526"/>
        <dbReference type="ChEBI" id="CHEBI:57870"/>
        <dbReference type="ChEBI" id="CHEBI:58272"/>
        <dbReference type="EC" id="4.1.1.39"/>
    </reaction>
</comment>
<comment type="catalytic activity">
    <reaction evidence="1">
        <text>D-ribulose 1,5-bisphosphate + O2 = 2-phosphoglycolate + (2R)-3-phosphoglycerate + 2 H(+)</text>
        <dbReference type="Rhea" id="RHEA:36631"/>
        <dbReference type="ChEBI" id="CHEBI:15378"/>
        <dbReference type="ChEBI" id="CHEBI:15379"/>
        <dbReference type="ChEBI" id="CHEBI:57870"/>
        <dbReference type="ChEBI" id="CHEBI:58033"/>
        <dbReference type="ChEBI" id="CHEBI:58272"/>
    </reaction>
</comment>
<comment type="cofactor">
    <cofactor evidence="1">
        <name>Mg(2+)</name>
        <dbReference type="ChEBI" id="CHEBI:18420"/>
    </cofactor>
    <text evidence="1">Binds 1 Mg(2+) ion per subunit.</text>
</comment>
<comment type="subunit">
    <text evidence="1">Heterohexadecamer of 8 large chains and 8 small chains.</text>
</comment>
<comment type="miscellaneous">
    <text evidence="1">The basic functional RuBisCO is composed of a large chain homodimer in a 'head-to-tail' conformation. In form I RuBisCO this homodimer is arranged in a barrel-like tetramer with the small subunits forming a tetrameric 'cap' on each end of the 'barrel'.</text>
</comment>
<comment type="similarity">
    <text evidence="1">Belongs to the RuBisCO large chain family. Type I subfamily.</text>
</comment>
<gene>
    <name evidence="1" type="primary">cbbL1</name>
    <name type="ordered locus">Nham_3751</name>
</gene>
<protein>
    <recommendedName>
        <fullName evidence="1">Ribulose bisphosphate carboxylase large chain 1</fullName>
        <shortName evidence="1">RuBisCO large subunit 1</shortName>
        <ecNumber evidence="1">4.1.1.39</ecNumber>
    </recommendedName>
</protein>
<name>RBL1A_NITHX</name>
<organism>
    <name type="scientific">Nitrobacter hamburgensis (strain DSM 10229 / NCIMB 13809 / X14)</name>
    <dbReference type="NCBI Taxonomy" id="323097"/>
    <lineage>
        <taxon>Bacteria</taxon>
        <taxon>Pseudomonadati</taxon>
        <taxon>Pseudomonadota</taxon>
        <taxon>Alphaproteobacteria</taxon>
        <taxon>Hyphomicrobiales</taxon>
        <taxon>Nitrobacteraceae</taxon>
        <taxon>Nitrobacter</taxon>
    </lineage>
</organism>
<reference key="1">
    <citation type="submission" date="2006-03" db="EMBL/GenBank/DDBJ databases">
        <title>Complete sequence of chromosome of Nitrobacter hamburgensis X14.</title>
        <authorList>
            <consortium name="US DOE Joint Genome Institute"/>
            <person name="Copeland A."/>
            <person name="Lucas S."/>
            <person name="Lapidus A."/>
            <person name="Barry K."/>
            <person name="Detter J.C."/>
            <person name="Glavina del Rio T."/>
            <person name="Hammon N."/>
            <person name="Israni S."/>
            <person name="Dalin E."/>
            <person name="Tice H."/>
            <person name="Pitluck S."/>
            <person name="Chain P."/>
            <person name="Malfatti S."/>
            <person name="Shin M."/>
            <person name="Vergez L."/>
            <person name="Schmutz J."/>
            <person name="Larimer F."/>
            <person name="Land M."/>
            <person name="Hauser L."/>
            <person name="Kyrpides N."/>
            <person name="Ivanova N."/>
            <person name="Ward B."/>
            <person name="Arp D."/>
            <person name="Klotz M."/>
            <person name="Stein L."/>
            <person name="O'Mullan G."/>
            <person name="Starkenburg S."/>
            <person name="Sayavedra L."/>
            <person name="Poret-Peterson A.T."/>
            <person name="Gentry M.E."/>
            <person name="Bruce D."/>
            <person name="Richardson P."/>
        </authorList>
    </citation>
    <scope>NUCLEOTIDE SEQUENCE [LARGE SCALE GENOMIC DNA]</scope>
    <source>
        <strain>DSM 10229 / NCIMB 13809 / X14</strain>
    </source>
</reference>
<keyword id="KW-0113">Calvin cycle</keyword>
<keyword id="KW-0120">Carbon dioxide fixation</keyword>
<keyword id="KW-0456">Lyase</keyword>
<keyword id="KW-0460">Magnesium</keyword>
<keyword id="KW-0479">Metal-binding</keyword>
<keyword id="KW-0503">Monooxygenase</keyword>
<keyword id="KW-0560">Oxidoreductase</keyword>
<keyword id="KW-1185">Reference proteome</keyword>
<evidence type="ECO:0000255" key="1">
    <source>
        <dbReference type="HAMAP-Rule" id="MF_01338"/>
    </source>
</evidence>
<accession>Q1QH22</accession>
<sequence length="488" mass="54155">MNVLNEKSLTVRGKDRYKSGVMSYKKMGYWEPDYTPKDTDIICLFRVTPQDGVDPIEAAAAVAGESSTATWTVVWTDRLTAAEKYRAKCYRVDPVPGAEGQYFAYIAYDLDLFESGSISNLTASVIGNVFGFKPLKALRLEDMRLPVAYVKTFKGPPTGIVVERERLDKFGRPLLGATVKPKLGLSGRNYGRVVYEALKGGLDFTKDDENINSQPFMHWRERFLYCMEAVNRAQAATGEVKGSYLNVTAATMEDMYERAEFAKELGSVVVMIDLVIGYTAIQSMSNWARKNDMILHLHRAGHSTYTRQRNHGVSFRVISKWMRLAGVDHIHAGTVVGKLEGDPLTTRGYYDICREEHNPMQLEHGIFFDQNWASLNKMMPVASGGIHAGQMHQLIQHLGEDVVLQFGGGTIGHPMGIQAGAIANRVALEAMILARNEGRDYVSEGPDILAKAAASCTPLKQALEVWKDVTFNYQSTDAPDYVTTPAVA</sequence>